<keyword id="KW-0997">Cell inner membrane</keyword>
<keyword id="KW-1003">Cell membrane</keyword>
<keyword id="KW-0444">Lipid biosynthesis</keyword>
<keyword id="KW-0443">Lipid metabolism</keyword>
<keyword id="KW-0472">Membrane</keyword>
<keyword id="KW-0594">Phospholipid biosynthesis</keyword>
<keyword id="KW-1208">Phospholipid metabolism</keyword>
<keyword id="KW-1185">Reference proteome</keyword>
<keyword id="KW-0808">Transferase</keyword>
<keyword id="KW-0812">Transmembrane</keyword>
<keyword id="KW-1133">Transmembrane helix</keyword>
<sequence>MPVEWLLIPFAYLLGSVSSAVIVSRTLGLPDPRQEGSKNPGATNVLRLGGKRAAILTLLGDASKGLIPLLIAKSMAVSPPLFAAIGFAAFVGHLYPVFFQFKGGKGVATALGVLLGFAWPVGLMALLTWIGVAALFRFSSLSALAAAVLAPVYVWLWLGSAELVVATLFMSMLLVYRHKGNIERLLKGEEARLGAKRL</sequence>
<organism>
    <name type="scientific">Methylococcus capsulatus (strain ATCC 33009 / NCIMB 11132 / Bath)</name>
    <dbReference type="NCBI Taxonomy" id="243233"/>
    <lineage>
        <taxon>Bacteria</taxon>
        <taxon>Pseudomonadati</taxon>
        <taxon>Pseudomonadota</taxon>
        <taxon>Gammaproteobacteria</taxon>
        <taxon>Methylococcales</taxon>
        <taxon>Methylococcaceae</taxon>
        <taxon>Methylococcus</taxon>
    </lineage>
</organism>
<proteinExistence type="inferred from homology"/>
<accession>Q602S2</accession>
<gene>
    <name evidence="1" type="primary">plsY</name>
    <name type="ordered locus">MCA2989</name>
</gene>
<comment type="function">
    <text evidence="1">Catalyzes the transfer of an acyl group from acyl-phosphate (acyl-PO(4)) to glycerol-3-phosphate (G3P) to form lysophosphatidic acid (LPA). This enzyme utilizes acyl-phosphate as fatty acyl donor, but not acyl-CoA or acyl-ACP.</text>
</comment>
<comment type="catalytic activity">
    <reaction evidence="1">
        <text>an acyl phosphate + sn-glycerol 3-phosphate = a 1-acyl-sn-glycero-3-phosphate + phosphate</text>
        <dbReference type="Rhea" id="RHEA:34075"/>
        <dbReference type="ChEBI" id="CHEBI:43474"/>
        <dbReference type="ChEBI" id="CHEBI:57597"/>
        <dbReference type="ChEBI" id="CHEBI:57970"/>
        <dbReference type="ChEBI" id="CHEBI:59918"/>
        <dbReference type="EC" id="2.3.1.275"/>
    </reaction>
</comment>
<comment type="pathway">
    <text evidence="1">Lipid metabolism; phospholipid metabolism.</text>
</comment>
<comment type="subunit">
    <text evidence="1">Probably interacts with PlsX.</text>
</comment>
<comment type="subcellular location">
    <subcellularLocation>
        <location evidence="1">Cell inner membrane</location>
        <topology evidence="1">Multi-pass membrane protein</topology>
    </subcellularLocation>
</comment>
<comment type="similarity">
    <text evidence="1">Belongs to the PlsY family.</text>
</comment>
<name>PLSY_METCA</name>
<feature type="chain" id="PRO_0000188400" description="Glycerol-3-phosphate acyltransferase">
    <location>
        <begin position="1"/>
        <end position="198"/>
    </location>
</feature>
<feature type="transmembrane region" description="Helical" evidence="1">
    <location>
        <begin position="3"/>
        <end position="23"/>
    </location>
</feature>
<feature type="transmembrane region" description="Helical" evidence="1">
    <location>
        <begin position="81"/>
        <end position="101"/>
    </location>
</feature>
<feature type="transmembrane region" description="Helical" evidence="1">
    <location>
        <begin position="113"/>
        <end position="133"/>
    </location>
</feature>
<feature type="transmembrane region" description="Helical" evidence="1">
    <location>
        <begin position="153"/>
        <end position="175"/>
    </location>
</feature>
<protein>
    <recommendedName>
        <fullName evidence="1">Glycerol-3-phosphate acyltransferase</fullName>
    </recommendedName>
    <alternativeName>
        <fullName evidence="1">Acyl-PO4 G3P acyltransferase</fullName>
    </alternativeName>
    <alternativeName>
        <fullName evidence="1">Acyl-phosphate--glycerol-3-phosphate acyltransferase</fullName>
    </alternativeName>
    <alternativeName>
        <fullName evidence="1">G3P acyltransferase</fullName>
        <shortName evidence="1">GPAT</shortName>
        <ecNumber evidence="1">2.3.1.275</ecNumber>
    </alternativeName>
    <alternativeName>
        <fullName evidence="1">Lysophosphatidic acid synthase</fullName>
        <shortName evidence="1">LPA synthase</shortName>
    </alternativeName>
</protein>
<reference key="1">
    <citation type="journal article" date="2004" name="PLoS Biol.">
        <title>Genomic insights into methanotrophy: the complete genome sequence of Methylococcus capsulatus (Bath).</title>
        <authorList>
            <person name="Ward N.L."/>
            <person name="Larsen O."/>
            <person name="Sakwa J."/>
            <person name="Bruseth L."/>
            <person name="Khouri H.M."/>
            <person name="Durkin A.S."/>
            <person name="Dimitrov G."/>
            <person name="Jiang L."/>
            <person name="Scanlan D."/>
            <person name="Kang K.H."/>
            <person name="Lewis M.R."/>
            <person name="Nelson K.E."/>
            <person name="Methe B.A."/>
            <person name="Wu M."/>
            <person name="Heidelberg J.F."/>
            <person name="Paulsen I.T."/>
            <person name="Fouts D.E."/>
            <person name="Ravel J."/>
            <person name="Tettelin H."/>
            <person name="Ren Q."/>
            <person name="Read T.D."/>
            <person name="DeBoy R.T."/>
            <person name="Seshadri R."/>
            <person name="Salzberg S.L."/>
            <person name="Jensen H.B."/>
            <person name="Birkeland N.K."/>
            <person name="Nelson W.C."/>
            <person name="Dodson R.J."/>
            <person name="Grindhaug S.H."/>
            <person name="Holt I.E."/>
            <person name="Eidhammer I."/>
            <person name="Jonasen I."/>
            <person name="Vanaken S."/>
            <person name="Utterback T.R."/>
            <person name="Feldblyum T.V."/>
            <person name="Fraser C.M."/>
            <person name="Lillehaug J.R."/>
            <person name="Eisen J.A."/>
        </authorList>
    </citation>
    <scope>NUCLEOTIDE SEQUENCE [LARGE SCALE GENOMIC DNA]</scope>
    <source>
        <strain>ATCC 33009 / NCIMB 11132 / Bath</strain>
    </source>
</reference>
<evidence type="ECO:0000255" key="1">
    <source>
        <dbReference type="HAMAP-Rule" id="MF_01043"/>
    </source>
</evidence>
<dbReference type="EC" id="2.3.1.275" evidence="1"/>
<dbReference type="EMBL" id="AE017282">
    <property type="protein sequence ID" value="AAU90866.1"/>
    <property type="molecule type" value="Genomic_DNA"/>
</dbReference>
<dbReference type="RefSeq" id="WP_010962179.1">
    <property type="nucleotide sequence ID" value="NC_002977.6"/>
</dbReference>
<dbReference type="SMR" id="Q602S2"/>
<dbReference type="STRING" id="243233.MCA2989"/>
<dbReference type="GeneID" id="88225151"/>
<dbReference type="KEGG" id="mca:MCA2989"/>
<dbReference type="eggNOG" id="COG0344">
    <property type="taxonomic scope" value="Bacteria"/>
</dbReference>
<dbReference type="HOGENOM" id="CLU_081254_0_0_6"/>
<dbReference type="UniPathway" id="UPA00085"/>
<dbReference type="Proteomes" id="UP000006821">
    <property type="component" value="Chromosome"/>
</dbReference>
<dbReference type="GO" id="GO:0005886">
    <property type="term" value="C:plasma membrane"/>
    <property type="evidence" value="ECO:0007669"/>
    <property type="project" value="UniProtKB-SubCell"/>
</dbReference>
<dbReference type="GO" id="GO:0043772">
    <property type="term" value="F:acyl-phosphate glycerol-3-phosphate acyltransferase activity"/>
    <property type="evidence" value="ECO:0007669"/>
    <property type="project" value="UniProtKB-UniRule"/>
</dbReference>
<dbReference type="GO" id="GO:0008654">
    <property type="term" value="P:phospholipid biosynthetic process"/>
    <property type="evidence" value="ECO:0007669"/>
    <property type="project" value="UniProtKB-UniRule"/>
</dbReference>
<dbReference type="HAMAP" id="MF_01043">
    <property type="entry name" value="PlsY"/>
    <property type="match status" value="1"/>
</dbReference>
<dbReference type="InterPro" id="IPR003811">
    <property type="entry name" value="G3P_acylTferase_PlsY"/>
</dbReference>
<dbReference type="NCBIfam" id="TIGR00023">
    <property type="entry name" value="glycerol-3-phosphate 1-O-acyltransferase PlsY"/>
    <property type="match status" value="1"/>
</dbReference>
<dbReference type="PANTHER" id="PTHR30309:SF0">
    <property type="entry name" value="GLYCEROL-3-PHOSPHATE ACYLTRANSFERASE-RELATED"/>
    <property type="match status" value="1"/>
</dbReference>
<dbReference type="PANTHER" id="PTHR30309">
    <property type="entry name" value="INNER MEMBRANE PROTEIN YGIH"/>
    <property type="match status" value="1"/>
</dbReference>
<dbReference type="Pfam" id="PF02660">
    <property type="entry name" value="G3P_acyltransf"/>
    <property type="match status" value="1"/>
</dbReference>
<dbReference type="SMART" id="SM01207">
    <property type="entry name" value="G3P_acyltransf"/>
    <property type="match status" value="1"/>
</dbReference>